<dbReference type="EC" id="2.5.1.141" evidence="1"/>
<dbReference type="EMBL" id="CP000100">
    <property type="protein sequence ID" value="ABB58630.1"/>
    <property type="status" value="ALT_INIT"/>
    <property type="molecule type" value="Genomic_DNA"/>
</dbReference>
<dbReference type="RefSeq" id="WP_011243820.1">
    <property type="nucleotide sequence ID" value="NZ_JACJTX010000002.1"/>
</dbReference>
<dbReference type="SMR" id="Q31JY9"/>
<dbReference type="STRING" id="1140.Synpcc7942_2600"/>
<dbReference type="PaxDb" id="1140-Synpcc7942_2600"/>
<dbReference type="KEGG" id="syf:Synpcc7942_2600"/>
<dbReference type="eggNOG" id="COG0109">
    <property type="taxonomic scope" value="Bacteria"/>
</dbReference>
<dbReference type="HOGENOM" id="CLU_029631_0_2_3"/>
<dbReference type="OrthoDB" id="9814417at2"/>
<dbReference type="BioCyc" id="SYNEL:SYNPCC7942_2600-MONOMER"/>
<dbReference type="UniPathway" id="UPA00834">
    <property type="reaction ID" value="UER00712"/>
</dbReference>
<dbReference type="Proteomes" id="UP000889800">
    <property type="component" value="Chromosome"/>
</dbReference>
<dbReference type="GO" id="GO:0005886">
    <property type="term" value="C:plasma membrane"/>
    <property type="evidence" value="ECO:0007669"/>
    <property type="project" value="UniProtKB-SubCell"/>
</dbReference>
<dbReference type="GO" id="GO:0008495">
    <property type="term" value="F:protoheme IX farnesyltransferase activity"/>
    <property type="evidence" value="ECO:0007669"/>
    <property type="project" value="UniProtKB-UniRule"/>
</dbReference>
<dbReference type="GO" id="GO:0048034">
    <property type="term" value="P:heme O biosynthetic process"/>
    <property type="evidence" value="ECO:0007669"/>
    <property type="project" value="UniProtKB-UniRule"/>
</dbReference>
<dbReference type="CDD" id="cd13957">
    <property type="entry name" value="PT_UbiA_Cox10"/>
    <property type="match status" value="1"/>
</dbReference>
<dbReference type="FunFam" id="1.10.357.140:FF:000001">
    <property type="entry name" value="Protoheme IX farnesyltransferase"/>
    <property type="match status" value="1"/>
</dbReference>
<dbReference type="Gene3D" id="1.10.357.140">
    <property type="entry name" value="UbiA prenyltransferase"/>
    <property type="match status" value="1"/>
</dbReference>
<dbReference type="HAMAP" id="MF_00154">
    <property type="entry name" value="CyoE_CtaB"/>
    <property type="match status" value="1"/>
</dbReference>
<dbReference type="InterPro" id="IPR006369">
    <property type="entry name" value="Protohaem_IX_farnesylTrfase"/>
</dbReference>
<dbReference type="InterPro" id="IPR000537">
    <property type="entry name" value="UbiA_prenyltransferase"/>
</dbReference>
<dbReference type="InterPro" id="IPR030470">
    <property type="entry name" value="UbiA_prenylTrfase_CS"/>
</dbReference>
<dbReference type="InterPro" id="IPR044878">
    <property type="entry name" value="UbiA_sf"/>
</dbReference>
<dbReference type="NCBIfam" id="TIGR01473">
    <property type="entry name" value="cyoE_ctaB"/>
    <property type="match status" value="1"/>
</dbReference>
<dbReference type="NCBIfam" id="NF003349">
    <property type="entry name" value="PRK04375.1-2"/>
    <property type="match status" value="1"/>
</dbReference>
<dbReference type="PANTHER" id="PTHR43448:SF7">
    <property type="entry name" value="4-HYDROXYBENZOATE SOLANESYLTRANSFERASE"/>
    <property type="match status" value="1"/>
</dbReference>
<dbReference type="PANTHER" id="PTHR43448">
    <property type="entry name" value="PROTOHEME IX FARNESYLTRANSFERASE, MITOCHONDRIAL"/>
    <property type="match status" value="1"/>
</dbReference>
<dbReference type="Pfam" id="PF01040">
    <property type="entry name" value="UbiA"/>
    <property type="match status" value="1"/>
</dbReference>
<dbReference type="PROSITE" id="PS00943">
    <property type="entry name" value="UBIA"/>
    <property type="match status" value="1"/>
</dbReference>
<sequence>MTLSSDSRLRFPLEEVGAQLLAYWQLTKPRIILLLLITTAAGMGLAAQGPLDPRLAIATLIGGGLAAAAANTLNCLYDRDIDAIMERTRWRPLPSGRIQPFEAWAFALSLAALSFILLDWQANQLAAGLALAGIVFYVVIYTHGLKRHSSQNIVIGGAAGAIPPLVGWAAVTGELAWPAWILFAIVCLWTPPHFWALALMIRDDYAAVKVPMLPVVVGNAATAQQILAYAGLLLPTTLALAWPLGAAGPFYSATALLLGLELLRRSRQLCQAPDSRPLARSLFKFSIFYLMLLCGAIAMDCLPGAPSLSQAIAAWPGF</sequence>
<evidence type="ECO:0000255" key="1">
    <source>
        <dbReference type="HAMAP-Rule" id="MF_00154"/>
    </source>
</evidence>
<evidence type="ECO:0000305" key="2"/>
<name>COXX_SYNE7</name>
<reference key="1">
    <citation type="submission" date="2005-08" db="EMBL/GenBank/DDBJ databases">
        <title>Complete sequence of chromosome 1 of Synechococcus elongatus PCC 7942.</title>
        <authorList>
            <consortium name="US DOE Joint Genome Institute"/>
            <person name="Copeland A."/>
            <person name="Lucas S."/>
            <person name="Lapidus A."/>
            <person name="Barry K."/>
            <person name="Detter J.C."/>
            <person name="Glavina T."/>
            <person name="Hammon N."/>
            <person name="Israni S."/>
            <person name="Pitluck S."/>
            <person name="Schmutz J."/>
            <person name="Larimer F."/>
            <person name="Land M."/>
            <person name="Kyrpides N."/>
            <person name="Lykidis A."/>
            <person name="Golden S."/>
            <person name="Richardson P."/>
        </authorList>
    </citation>
    <scope>NUCLEOTIDE SEQUENCE [LARGE SCALE GENOMIC DNA]</scope>
    <source>
        <strain>ATCC 33912 / PCC 7942 / FACHB-805</strain>
    </source>
</reference>
<keyword id="KW-0997">Cell inner membrane</keyword>
<keyword id="KW-1003">Cell membrane</keyword>
<keyword id="KW-0350">Heme biosynthesis</keyword>
<keyword id="KW-0472">Membrane</keyword>
<keyword id="KW-1185">Reference proteome</keyword>
<keyword id="KW-0808">Transferase</keyword>
<keyword id="KW-0812">Transmembrane</keyword>
<keyword id="KW-1133">Transmembrane helix</keyword>
<feature type="chain" id="PRO_0000327178" description="Protoheme IX farnesyltransferase">
    <location>
        <begin position="1"/>
        <end position="318"/>
    </location>
</feature>
<feature type="transmembrane region" description="Helical" evidence="1">
    <location>
        <begin position="31"/>
        <end position="51"/>
    </location>
</feature>
<feature type="transmembrane region" description="Helical" evidence="1">
    <location>
        <begin position="55"/>
        <end position="75"/>
    </location>
</feature>
<feature type="transmembrane region" description="Helical" evidence="1">
    <location>
        <begin position="98"/>
        <end position="118"/>
    </location>
</feature>
<feature type="transmembrane region" description="Helical" evidence="1">
    <location>
        <begin position="125"/>
        <end position="145"/>
    </location>
</feature>
<feature type="transmembrane region" description="Helical" evidence="1">
    <location>
        <begin position="153"/>
        <end position="173"/>
    </location>
</feature>
<feature type="transmembrane region" description="Helical" evidence="1">
    <location>
        <begin position="181"/>
        <end position="201"/>
    </location>
</feature>
<feature type="transmembrane region" description="Helical" evidence="1">
    <location>
        <begin position="206"/>
        <end position="228"/>
    </location>
</feature>
<feature type="transmembrane region" description="Helical" evidence="1">
    <location>
        <begin position="238"/>
        <end position="260"/>
    </location>
</feature>
<feature type="transmembrane region" description="Helical" evidence="1">
    <location>
        <begin position="285"/>
        <end position="305"/>
    </location>
</feature>
<proteinExistence type="inferred from homology"/>
<organism>
    <name type="scientific">Synechococcus elongatus (strain ATCC 33912 / PCC 7942 / FACHB-805)</name>
    <name type="common">Anacystis nidulans R2</name>
    <dbReference type="NCBI Taxonomy" id="1140"/>
    <lineage>
        <taxon>Bacteria</taxon>
        <taxon>Bacillati</taxon>
        <taxon>Cyanobacteriota</taxon>
        <taxon>Cyanophyceae</taxon>
        <taxon>Synechococcales</taxon>
        <taxon>Synechococcaceae</taxon>
        <taxon>Synechococcus</taxon>
    </lineage>
</organism>
<protein>
    <recommendedName>
        <fullName evidence="1">Protoheme IX farnesyltransferase</fullName>
        <ecNumber evidence="1">2.5.1.141</ecNumber>
    </recommendedName>
    <alternativeName>
        <fullName evidence="1">Heme B farnesyltransferase</fullName>
    </alternativeName>
    <alternativeName>
        <fullName evidence="1">Heme O synthase</fullName>
    </alternativeName>
</protein>
<gene>
    <name evidence="1" type="primary">ctaB</name>
    <name type="ordered locus">Synpcc7942_2600</name>
</gene>
<accession>Q31JY9</accession>
<comment type="function">
    <text evidence="1">Converts heme B (protoheme IX) to heme O by substitution of the vinyl group on carbon 2 of heme B porphyrin ring with a hydroxyethyl farnesyl side group.</text>
</comment>
<comment type="catalytic activity">
    <reaction evidence="1">
        <text>heme b + (2E,6E)-farnesyl diphosphate + H2O = Fe(II)-heme o + diphosphate</text>
        <dbReference type="Rhea" id="RHEA:28070"/>
        <dbReference type="ChEBI" id="CHEBI:15377"/>
        <dbReference type="ChEBI" id="CHEBI:33019"/>
        <dbReference type="ChEBI" id="CHEBI:60344"/>
        <dbReference type="ChEBI" id="CHEBI:60530"/>
        <dbReference type="ChEBI" id="CHEBI:175763"/>
        <dbReference type="EC" id="2.5.1.141"/>
    </reaction>
</comment>
<comment type="pathway">
    <text evidence="1">Porphyrin-containing compound metabolism; heme O biosynthesis; heme O from protoheme: step 1/1.</text>
</comment>
<comment type="subcellular location">
    <subcellularLocation>
        <location evidence="1">Cell inner membrane</location>
        <topology evidence="1">Multi-pass membrane protein</topology>
    </subcellularLocation>
</comment>
<comment type="miscellaneous">
    <text evidence="1">Carbon 2 of the heme B porphyrin ring is defined according to the Fischer nomenclature.</text>
</comment>
<comment type="similarity">
    <text evidence="1">Belongs to the UbiA prenyltransferase family. Protoheme IX farnesyltransferase subfamily.</text>
</comment>
<comment type="sequence caution" evidence="2">
    <conflict type="erroneous initiation">
        <sequence resource="EMBL-CDS" id="ABB58630"/>
    </conflict>
</comment>